<keyword id="KW-0030">Aminoacyl-tRNA synthetase</keyword>
<keyword id="KW-0067">ATP-binding</keyword>
<keyword id="KW-0963">Cytoplasm</keyword>
<keyword id="KW-0436">Ligase</keyword>
<keyword id="KW-0479">Metal-binding</keyword>
<keyword id="KW-0547">Nucleotide-binding</keyword>
<keyword id="KW-0648">Protein biosynthesis</keyword>
<keyword id="KW-1185">Reference proteome</keyword>
<keyword id="KW-0862">Zinc</keyword>
<proteinExistence type="inferred from homology"/>
<name>SYE_PARUW</name>
<gene>
    <name evidence="1" type="primary">gltX</name>
    <name type="ordered locus">pc0244</name>
</gene>
<feature type="chain" id="PRO_0000119618" description="Glutamate--tRNA ligase">
    <location>
        <begin position="1"/>
        <end position="502"/>
    </location>
</feature>
<feature type="short sequence motif" description="'HIGH' region" evidence="1">
    <location>
        <begin position="9"/>
        <end position="19"/>
    </location>
</feature>
<feature type="short sequence motif" description="'KMSKS' region" evidence="1">
    <location>
        <begin position="250"/>
        <end position="254"/>
    </location>
</feature>
<feature type="binding site" evidence="1">
    <location>
        <position position="106"/>
    </location>
    <ligand>
        <name>Zn(2+)</name>
        <dbReference type="ChEBI" id="CHEBI:29105"/>
    </ligand>
</feature>
<feature type="binding site" evidence="1">
    <location>
        <position position="108"/>
    </location>
    <ligand>
        <name>Zn(2+)</name>
        <dbReference type="ChEBI" id="CHEBI:29105"/>
    </ligand>
</feature>
<feature type="binding site" evidence="1">
    <location>
        <position position="133"/>
    </location>
    <ligand>
        <name>Zn(2+)</name>
        <dbReference type="ChEBI" id="CHEBI:29105"/>
    </ligand>
</feature>
<feature type="binding site" evidence="1">
    <location>
        <position position="135"/>
    </location>
    <ligand>
        <name>Zn(2+)</name>
        <dbReference type="ChEBI" id="CHEBI:29105"/>
    </ligand>
</feature>
<feature type="binding site" evidence="1">
    <location>
        <position position="253"/>
    </location>
    <ligand>
        <name>ATP</name>
        <dbReference type="ChEBI" id="CHEBI:30616"/>
    </ligand>
</feature>
<evidence type="ECO:0000255" key="1">
    <source>
        <dbReference type="HAMAP-Rule" id="MF_00022"/>
    </source>
</evidence>
<reference key="1">
    <citation type="journal article" date="2004" name="Science">
        <title>Illuminating the evolutionary history of chlamydiae.</title>
        <authorList>
            <person name="Horn M."/>
            <person name="Collingro A."/>
            <person name="Schmitz-Esser S."/>
            <person name="Beier C.L."/>
            <person name="Purkhold U."/>
            <person name="Fartmann B."/>
            <person name="Brandt P."/>
            <person name="Nyakatura G.J."/>
            <person name="Droege M."/>
            <person name="Frishman D."/>
            <person name="Rattei T."/>
            <person name="Mewes H.-W."/>
            <person name="Wagner M."/>
        </authorList>
    </citation>
    <scope>NUCLEOTIDE SEQUENCE [LARGE SCALE GENOMIC DNA]</scope>
    <source>
        <strain>UWE25</strain>
    </source>
</reference>
<organism>
    <name type="scientific">Protochlamydia amoebophila (strain UWE25)</name>
    <dbReference type="NCBI Taxonomy" id="264201"/>
    <lineage>
        <taxon>Bacteria</taxon>
        <taxon>Pseudomonadati</taxon>
        <taxon>Chlamydiota</taxon>
        <taxon>Chlamydiia</taxon>
        <taxon>Parachlamydiales</taxon>
        <taxon>Parachlamydiaceae</taxon>
        <taxon>Candidatus Protochlamydia</taxon>
    </lineage>
</organism>
<accession>Q6MEN1</accession>
<protein>
    <recommendedName>
        <fullName evidence="1">Glutamate--tRNA ligase</fullName>
        <ecNumber evidence="1">6.1.1.17</ecNumber>
    </recommendedName>
    <alternativeName>
        <fullName evidence="1">Glutamyl-tRNA synthetase</fullName>
        <shortName evidence="1">GluRS</shortName>
    </alternativeName>
</protein>
<dbReference type="EC" id="6.1.1.17" evidence="1"/>
<dbReference type="EMBL" id="BX908798">
    <property type="protein sequence ID" value="CAF22968.1"/>
    <property type="molecule type" value="Genomic_DNA"/>
</dbReference>
<dbReference type="RefSeq" id="WP_011174794.1">
    <property type="nucleotide sequence ID" value="NC_005861.2"/>
</dbReference>
<dbReference type="SMR" id="Q6MEN1"/>
<dbReference type="STRING" id="264201.pc0244"/>
<dbReference type="KEGG" id="pcu:PC_RS01185"/>
<dbReference type="eggNOG" id="COG0008">
    <property type="taxonomic scope" value="Bacteria"/>
</dbReference>
<dbReference type="HOGENOM" id="CLU_015768_6_3_0"/>
<dbReference type="OrthoDB" id="9807503at2"/>
<dbReference type="Proteomes" id="UP000000529">
    <property type="component" value="Chromosome"/>
</dbReference>
<dbReference type="GO" id="GO:0005829">
    <property type="term" value="C:cytosol"/>
    <property type="evidence" value="ECO:0007669"/>
    <property type="project" value="TreeGrafter"/>
</dbReference>
<dbReference type="GO" id="GO:0005524">
    <property type="term" value="F:ATP binding"/>
    <property type="evidence" value="ECO:0007669"/>
    <property type="project" value="UniProtKB-UniRule"/>
</dbReference>
<dbReference type="GO" id="GO:0004818">
    <property type="term" value="F:glutamate-tRNA ligase activity"/>
    <property type="evidence" value="ECO:0007669"/>
    <property type="project" value="UniProtKB-UniRule"/>
</dbReference>
<dbReference type="GO" id="GO:0000049">
    <property type="term" value="F:tRNA binding"/>
    <property type="evidence" value="ECO:0007669"/>
    <property type="project" value="InterPro"/>
</dbReference>
<dbReference type="GO" id="GO:0008270">
    <property type="term" value="F:zinc ion binding"/>
    <property type="evidence" value="ECO:0007669"/>
    <property type="project" value="UniProtKB-UniRule"/>
</dbReference>
<dbReference type="GO" id="GO:0006424">
    <property type="term" value="P:glutamyl-tRNA aminoacylation"/>
    <property type="evidence" value="ECO:0007669"/>
    <property type="project" value="UniProtKB-UniRule"/>
</dbReference>
<dbReference type="CDD" id="cd00808">
    <property type="entry name" value="GluRS_core"/>
    <property type="match status" value="1"/>
</dbReference>
<dbReference type="FunFam" id="3.40.50.620:FF:000045">
    <property type="entry name" value="Glutamate--tRNA ligase, mitochondrial"/>
    <property type="match status" value="1"/>
</dbReference>
<dbReference type="Gene3D" id="1.10.10.350">
    <property type="match status" value="1"/>
</dbReference>
<dbReference type="Gene3D" id="3.40.50.620">
    <property type="entry name" value="HUPs"/>
    <property type="match status" value="1"/>
</dbReference>
<dbReference type="HAMAP" id="MF_00022">
    <property type="entry name" value="Glu_tRNA_synth_type1"/>
    <property type="match status" value="1"/>
</dbReference>
<dbReference type="InterPro" id="IPR045462">
    <property type="entry name" value="aa-tRNA-synth_I_cd-bd"/>
</dbReference>
<dbReference type="InterPro" id="IPR020751">
    <property type="entry name" value="aa-tRNA-synth_I_codon-bd_sub2"/>
</dbReference>
<dbReference type="InterPro" id="IPR001412">
    <property type="entry name" value="aa-tRNA-synth_I_CS"/>
</dbReference>
<dbReference type="InterPro" id="IPR008925">
    <property type="entry name" value="aa_tRNA-synth_I_cd-bd_sf"/>
</dbReference>
<dbReference type="InterPro" id="IPR004527">
    <property type="entry name" value="Glu-tRNA-ligase_bac/mito"/>
</dbReference>
<dbReference type="InterPro" id="IPR000924">
    <property type="entry name" value="Glu/Gln-tRNA-synth"/>
</dbReference>
<dbReference type="InterPro" id="IPR020058">
    <property type="entry name" value="Glu/Gln-tRNA-synth_Ib_cat-dom"/>
</dbReference>
<dbReference type="InterPro" id="IPR049940">
    <property type="entry name" value="GluQ/Sye"/>
</dbReference>
<dbReference type="InterPro" id="IPR033910">
    <property type="entry name" value="GluRS_core"/>
</dbReference>
<dbReference type="InterPro" id="IPR014729">
    <property type="entry name" value="Rossmann-like_a/b/a_fold"/>
</dbReference>
<dbReference type="NCBIfam" id="TIGR00464">
    <property type="entry name" value="gltX_bact"/>
    <property type="match status" value="1"/>
</dbReference>
<dbReference type="PANTHER" id="PTHR43311">
    <property type="entry name" value="GLUTAMATE--TRNA LIGASE"/>
    <property type="match status" value="1"/>
</dbReference>
<dbReference type="PANTHER" id="PTHR43311:SF2">
    <property type="entry name" value="GLUTAMATE--TRNA LIGASE, MITOCHONDRIAL-RELATED"/>
    <property type="match status" value="1"/>
</dbReference>
<dbReference type="Pfam" id="PF19269">
    <property type="entry name" value="Anticodon_2"/>
    <property type="match status" value="1"/>
</dbReference>
<dbReference type="Pfam" id="PF00749">
    <property type="entry name" value="tRNA-synt_1c"/>
    <property type="match status" value="1"/>
</dbReference>
<dbReference type="PRINTS" id="PR00987">
    <property type="entry name" value="TRNASYNTHGLU"/>
</dbReference>
<dbReference type="SUPFAM" id="SSF48163">
    <property type="entry name" value="An anticodon-binding domain of class I aminoacyl-tRNA synthetases"/>
    <property type="match status" value="1"/>
</dbReference>
<dbReference type="SUPFAM" id="SSF52374">
    <property type="entry name" value="Nucleotidylyl transferase"/>
    <property type="match status" value="1"/>
</dbReference>
<dbReference type="PROSITE" id="PS00178">
    <property type="entry name" value="AA_TRNA_LIGASE_I"/>
    <property type="match status" value="1"/>
</dbReference>
<sequence>MSVRVRIAPSPTGDPHVGTAYMALFNMIFARHYNGTFILRIEDTDRARSRPEYEENIYSALKWANIQWDEGPDIGGAYGPYRQSERFDIYKQYAEELLSKGKAYKCFCTAAELDEMRELSAKQGGRQGYDRRCRHLTPDEIIEREQAELSYVIRLKVPLNGECVYEDAIKKRMTFPWADIDDQVLLKSDGFPTYHLANVVDDYLMKISHVIRGDEWMSSTPKHILLYESFGWTPPTFLHMPLLLGKDGKKLSKRKNPTSIFFYRDSGYLSEAFINFLTLMGYSMTGDQEIYSLDDIIREFDYKRIGVSGAIFDVQKLDWVNQQYLIKNIPVEQLWDRIKEWSFNDEFMQRLMPLCHSRIKTFGDFMDLFNFLFINHLHYNDAIFVVKDLSKEQICYLIQSLIWRLDELENWNGTGVNQASREIAEIFGVNHKKIVMPILFASLMSKTQGPPLFDSVNLLGKDRTRARLLKAMEYLGGISNKKMASLKKAWQEKSGQPLMIKD</sequence>
<comment type="function">
    <text evidence="1">Catalyzes the attachment of glutamate to tRNA(Glu) in a two-step reaction: glutamate is first activated by ATP to form Glu-AMP and then transferred to the acceptor end of tRNA(Glu).</text>
</comment>
<comment type="catalytic activity">
    <reaction evidence="1">
        <text>tRNA(Glu) + L-glutamate + ATP = L-glutamyl-tRNA(Glu) + AMP + diphosphate</text>
        <dbReference type="Rhea" id="RHEA:23540"/>
        <dbReference type="Rhea" id="RHEA-COMP:9663"/>
        <dbReference type="Rhea" id="RHEA-COMP:9680"/>
        <dbReference type="ChEBI" id="CHEBI:29985"/>
        <dbReference type="ChEBI" id="CHEBI:30616"/>
        <dbReference type="ChEBI" id="CHEBI:33019"/>
        <dbReference type="ChEBI" id="CHEBI:78442"/>
        <dbReference type="ChEBI" id="CHEBI:78520"/>
        <dbReference type="ChEBI" id="CHEBI:456215"/>
        <dbReference type="EC" id="6.1.1.17"/>
    </reaction>
</comment>
<comment type="cofactor">
    <cofactor evidence="1">
        <name>Zn(2+)</name>
        <dbReference type="ChEBI" id="CHEBI:29105"/>
    </cofactor>
    <text evidence="1">Binds 1 zinc ion per subunit.</text>
</comment>
<comment type="subunit">
    <text evidence="1">Monomer.</text>
</comment>
<comment type="subcellular location">
    <subcellularLocation>
        <location evidence="1">Cytoplasm</location>
    </subcellularLocation>
</comment>
<comment type="similarity">
    <text evidence="1">Belongs to the class-I aminoacyl-tRNA synthetase family. Glutamate--tRNA ligase type 1 subfamily.</text>
</comment>